<organism>
    <name type="scientific">Polaromonas sp. (strain JS666 / ATCC BAA-500)</name>
    <dbReference type="NCBI Taxonomy" id="296591"/>
    <lineage>
        <taxon>Bacteria</taxon>
        <taxon>Pseudomonadati</taxon>
        <taxon>Pseudomonadota</taxon>
        <taxon>Betaproteobacteria</taxon>
        <taxon>Burkholderiales</taxon>
        <taxon>Comamonadaceae</taxon>
        <taxon>Polaromonas</taxon>
    </lineage>
</organism>
<evidence type="ECO:0000255" key="1">
    <source>
        <dbReference type="HAMAP-Rule" id="MF_01855"/>
    </source>
</evidence>
<name>F16PA_POLSJ</name>
<sequence>MSQRISLTRYLVEQQRREGHIPAQLRLLLEVVARACKGISQSVNKGALGGVLGTAGSENVQGEVQKKLDIIANEVLIEANEWGGHLAAMASEEMDSIYLVPNRYPQGEYLLLFDPLDGSSNIDVNVSIGTIFSVLKKPDDHAGVEEKDFLQPGNKQVAAGYCVYGPQTTLVLTVGDGVAMFTLDREQGSFVLIEENVRIPEDTKEFAINMSNMRHWDAPVKRYIDECLQGTEGPRGKDFNMRWVASMVADVHRILSRGGIFMYPWDKREPEKAGKLRLMYEANPMGWIVEQAGGSATNGKQRILDIQPGKLHERVSVILGSKNEVERVTGYHSGL</sequence>
<comment type="catalytic activity">
    <reaction evidence="1">
        <text>beta-D-fructose 1,6-bisphosphate + H2O = beta-D-fructose 6-phosphate + phosphate</text>
        <dbReference type="Rhea" id="RHEA:11064"/>
        <dbReference type="ChEBI" id="CHEBI:15377"/>
        <dbReference type="ChEBI" id="CHEBI:32966"/>
        <dbReference type="ChEBI" id="CHEBI:43474"/>
        <dbReference type="ChEBI" id="CHEBI:57634"/>
        <dbReference type="EC" id="3.1.3.11"/>
    </reaction>
</comment>
<comment type="cofactor">
    <cofactor evidence="1">
        <name>Mg(2+)</name>
        <dbReference type="ChEBI" id="CHEBI:18420"/>
    </cofactor>
    <text evidence="1">Binds 2 magnesium ions per subunit.</text>
</comment>
<comment type="pathway">
    <text evidence="1">Carbohydrate biosynthesis; gluconeogenesis.</text>
</comment>
<comment type="subunit">
    <text evidence="1">Homotetramer.</text>
</comment>
<comment type="subcellular location">
    <subcellularLocation>
        <location evidence="1">Cytoplasm</location>
    </subcellularLocation>
</comment>
<comment type="similarity">
    <text evidence="1">Belongs to the FBPase class 1 family.</text>
</comment>
<keyword id="KW-0119">Carbohydrate metabolism</keyword>
<keyword id="KW-0963">Cytoplasm</keyword>
<keyword id="KW-0378">Hydrolase</keyword>
<keyword id="KW-0460">Magnesium</keyword>
<keyword id="KW-0479">Metal-binding</keyword>
<keyword id="KW-1185">Reference proteome</keyword>
<accession>Q12D67</accession>
<gene>
    <name evidence="1" type="primary">fbp</name>
    <name type="ordered locus">Bpro_1586</name>
</gene>
<dbReference type="EC" id="3.1.3.11" evidence="1"/>
<dbReference type="EMBL" id="CP000316">
    <property type="protein sequence ID" value="ABE43525.1"/>
    <property type="molecule type" value="Genomic_DNA"/>
</dbReference>
<dbReference type="RefSeq" id="WP_011482524.1">
    <property type="nucleotide sequence ID" value="NC_007948.1"/>
</dbReference>
<dbReference type="SMR" id="Q12D67"/>
<dbReference type="STRING" id="296591.Bpro_1586"/>
<dbReference type="KEGG" id="pol:Bpro_1586"/>
<dbReference type="eggNOG" id="COG0158">
    <property type="taxonomic scope" value="Bacteria"/>
</dbReference>
<dbReference type="HOGENOM" id="CLU_039977_0_0_4"/>
<dbReference type="OrthoDB" id="9806756at2"/>
<dbReference type="UniPathway" id="UPA00138"/>
<dbReference type="Proteomes" id="UP000001983">
    <property type="component" value="Chromosome"/>
</dbReference>
<dbReference type="GO" id="GO:0005829">
    <property type="term" value="C:cytosol"/>
    <property type="evidence" value="ECO:0007669"/>
    <property type="project" value="TreeGrafter"/>
</dbReference>
<dbReference type="GO" id="GO:0042132">
    <property type="term" value="F:fructose 1,6-bisphosphate 1-phosphatase activity"/>
    <property type="evidence" value="ECO:0007669"/>
    <property type="project" value="UniProtKB-UniRule"/>
</dbReference>
<dbReference type="GO" id="GO:0000287">
    <property type="term" value="F:magnesium ion binding"/>
    <property type="evidence" value="ECO:0007669"/>
    <property type="project" value="UniProtKB-UniRule"/>
</dbReference>
<dbReference type="GO" id="GO:0030388">
    <property type="term" value="P:fructose 1,6-bisphosphate metabolic process"/>
    <property type="evidence" value="ECO:0007669"/>
    <property type="project" value="TreeGrafter"/>
</dbReference>
<dbReference type="GO" id="GO:0006002">
    <property type="term" value="P:fructose 6-phosphate metabolic process"/>
    <property type="evidence" value="ECO:0007669"/>
    <property type="project" value="TreeGrafter"/>
</dbReference>
<dbReference type="GO" id="GO:0006000">
    <property type="term" value="P:fructose metabolic process"/>
    <property type="evidence" value="ECO:0007669"/>
    <property type="project" value="TreeGrafter"/>
</dbReference>
<dbReference type="GO" id="GO:0006094">
    <property type="term" value="P:gluconeogenesis"/>
    <property type="evidence" value="ECO:0007669"/>
    <property type="project" value="UniProtKB-UniRule"/>
</dbReference>
<dbReference type="GO" id="GO:0005986">
    <property type="term" value="P:sucrose biosynthetic process"/>
    <property type="evidence" value="ECO:0007669"/>
    <property type="project" value="TreeGrafter"/>
</dbReference>
<dbReference type="CDD" id="cd00354">
    <property type="entry name" value="FBPase"/>
    <property type="match status" value="1"/>
</dbReference>
<dbReference type="FunFam" id="3.30.540.10:FF:000006">
    <property type="entry name" value="Fructose-1,6-bisphosphatase class 1"/>
    <property type="match status" value="1"/>
</dbReference>
<dbReference type="FunFam" id="3.40.190.80:FF:000011">
    <property type="entry name" value="Fructose-1,6-bisphosphatase class 1"/>
    <property type="match status" value="1"/>
</dbReference>
<dbReference type="Gene3D" id="3.40.190.80">
    <property type="match status" value="1"/>
</dbReference>
<dbReference type="Gene3D" id="3.30.540.10">
    <property type="entry name" value="Fructose-1,6-Bisphosphatase, subunit A, domain 1"/>
    <property type="match status" value="1"/>
</dbReference>
<dbReference type="HAMAP" id="MF_01855">
    <property type="entry name" value="FBPase_class1"/>
    <property type="match status" value="1"/>
</dbReference>
<dbReference type="InterPro" id="IPR044015">
    <property type="entry name" value="FBPase_C_dom"/>
</dbReference>
<dbReference type="InterPro" id="IPR000146">
    <property type="entry name" value="FBPase_class-1"/>
</dbReference>
<dbReference type="InterPro" id="IPR033391">
    <property type="entry name" value="FBPase_N"/>
</dbReference>
<dbReference type="InterPro" id="IPR028343">
    <property type="entry name" value="FBPtase"/>
</dbReference>
<dbReference type="NCBIfam" id="NF006778">
    <property type="entry name" value="PRK09293.1-1"/>
    <property type="match status" value="1"/>
</dbReference>
<dbReference type="NCBIfam" id="NF006779">
    <property type="entry name" value="PRK09293.1-3"/>
    <property type="match status" value="1"/>
</dbReference>
<dbReference type="NCBIfam" id="NF006780">
    <property type="entry name" value="PRK09293.1-4"/>
    <property type="match status" value="1"/>
</dbReference>
<dbReference type="PANTHER" id="PTHR11556">
    <property type="entry name" value="FRUCTOSE-1,6-BISPHOSPHATASE-RELATED"/>
    <property type="match status" value="1"/>
</dbReference>
<dbReference type="PANTHER" id="PTHR11556:SF35">
    <property type="entry name" value="SEDOHEPTULOSE-1,7-BISPHOSPHATASE, CHLOROPLASTIC"/>
    <property type="match status" value="1"/>
</dbReference>
<dbReference type="Pfam" id="PF00316">
    <property type="entry name" value="FBPase"/>
    <property type="match status" value="1"/>
</dbReference>
<dbReference type="Pfam" id="PF18913">
    <property type="entry name" value="FBPase_C"/>
    <property type="match status" value="1"/>
</dbReference>
<dbReference type="PIRSF" id="PIRSF500210">
    <property type="entry name" value="FBPtase"/>
    <property type="match status" value="1"/>
</dbReference>
<dbReference type="PIRSF" id="PIRSF000904">
    <property type="entry name" value="FBPtase_SBPase"/>
    <property type="match status" value="1"/>
</dbReference>
<dbReference type="PRINTS" id="PR00115">
    <property type="entry name" value="F16BPHPHTASE"/>
</dbReference>
<dbReference type="SUPFAM" id="SSF56655">
    <property type="entry name" value="Carbohydrate phosphatase"/>
    <property type="match status" value="1"/>
</dbReference>
<reference key="1">
    <citation type="journal article" date="2008" name="Appl. Environ. Microbiol.">
        <title>The genome of Polaromonas sp. strain JS666: insights into the evolution of a hydrocarbon- and xenobiotic-degrading bacterium, and features of relevance to biotechnology.</title>
        <authorList>
            <person name="Mattes T.E."/>
            <person name="Alexander A.K."/>
            <person name="Richardson P.M."/>
            <person name="Munk A.C."/>
            <person name="Han C.S."/>
            <person name="Stothard P."/>
            <person name="Coleman N.V."/>
        </authorList>
    </citation>
    <scope>NUCLEOTIDE SEQUENCE [LARGE SCALE GENOMIC DNA]</scope>
    <source>
        <strain>JS666 / ATCC BAA-500</strain>
    </source>
</reference>
<proteinExistence type="inferred from homology"/>
<feature type="chain" id="PRO_0000364630" description="Fructose-1,6-bisphosphatase class 1">
    <location>
        <begin position="1"/>
        <end position="335"/>
    </location>
</feature>
<feature type="binding site" evidence="1">
    <location>
        <position position="92"/>
    </location>
    <ligand>
        <name>Mg(2+)</name>
        <dbReference type="ChEBI" id="CHEBI:18420"/>
        <label>1</label>
    </ligand>
</feature>
<feature type="binding site" evidence="1">
    <location>
        <position position="114"/>
    </location>
    <ligand>
        <name>Mg(2+)</name>
        <dbReference type="ChEBI" id="CHEBI:18420"/>
        <label>1</label>
    </ligand>
</feature>
<feature type="binding site" evidence="1">
    <location>
        <position position="114"/>
    </location>
    <ligand>
        <name>Mg(2+)</name>
        <dbReference type="ChEBI" id="CHEBI:18420"/>
        <label>2</label>
    </ligand>
</feature>
<feature type="binding site" evidence="1">
    <location>
        <position position="116"/>
    </location>
    <ligand>
        <name>Mg(2+)</name>
        <dbReference type="ChEBI" id="CHEBI:18420"/>
        <label>1</label>
    </ligand>
</feature>
<feature type="binding site" evidence="1">
    <location>
        <begin position="117"/>
        <end position="120"/>
    </location>
    <ligand>
        <name>substrate</name>
    </ligand>
</feature>
<feature type="binding site" evidence="1">
    <location>
        <position position="117"/>
    </location>
    <ligand>
        <name>Mg(2+)</name>
        <dbReference type="ChEBI" id="CHEBI:18420"/>
        <label>2</label>
    </ligand>
</feature>
<feature type="binding site" evidence="1">
    <location>
        <position position="209"/>
    </location>
    <ligand>
        <name>substrate</name>
    </ligand>
</feature>
<feature type="binding site" evidence="1">
    <location>
        <position position="275"/>
    </location>
    <ligand>
        <name>substrate</name>
    </ligand>
</feature>
<feature type="binding site" evidence="1">
    <location>
        <position position="281"/>
    </location>
    <ligand>
        <name>Mg(2+)</name>
        <dbReference type="ChEBI" id="CHEBI:18420"/>
        <label>2</label>
    </ligand>
</feature>
<protein>
    <recommendedName>
        <fullName evidence="1">Fructose-1,6-bisphosphatase class 1</fullName>
        <shortName evidence="1">FBPase class 1</shortName>
        <ecNumber evidence="1">3.1.3.11</ecNumber>
    </recommendedName>
    <alternativeName>
        <fullName evidence="1">D-fructose-1,6-bisphosphate 1-phosphohydrolase class 1</fullName>
    </alternativeName>
</protein>